<proteinExistence type="inferred from homology"/>
<comment type="function">
    <text evidence="1">NDH-1 shuttles electrons from an unknown electron donor, via FMN and iron-sulfur (Fe-S) centers, to quinones in the respiratory and/or the photosynthetic chain. The immediate electron acceptor for the enzyme in this species is believed to be plastoquinone. Couples the redox reaction to proton translocation, and thus conserves the redox energy in a proton gradient. Cyanobacterial NDH-1 also plays a role in inorganic carbon-concentration.</text>
</comment>
<comment type="catalytic activity">
    <reaction evidence="1">
        <text>a plastoquinone + NADH + (n+1) H(+)(in) = a plastoquinol + NAD(+) + n H(+)(out)</text>
        <dbReference type="Rhea" id="RHEA:42608"/>
        <dbReference type="Rhea" id="RHEA-COMP:9561"/>
        <dbReference type="Rhea" id="RHEA-COMP:9562"/>
        <dbReference type="ChEBI" id="CHEBI:15378"/>
        <dbReference type="ChEBI" id="CHEBI:17757"/>
        <dbReference type="ChEBI" id="CHEBI:57540"/>
        <dbReference type="ChEBI" id="CHEBI:57945"/>
        <dbReference type="ChEBI" id="CHEBI:62192"/>
    </reaction>
</comment>
<comment type="catalytic activity">
    <reaction evidence="1">
        <text>a plastoquinone + NADPH + (n+1) H(+)(in) = a plastoquinol + NADP(+) + n H(+)(out)</text>
        <dbReference type="Rhea" id="RHEA:42612"/>
        <dbReference type="Rhea" id="RHEA-COMP:9561"/>
        <dbReference type="Rhea" id="RHEA-COMP:9562"/>
        <dbReference type="ChEBI" id="CHEBI:15378"/>
        <dbReference type="ChEBI" id="CHEBI:17757"/>
        <dbReference type="ChEBI" id="CHEBI:57783"/>
        <dbReference type="ChEBI" id="CHEBI:58349"/>
        <dbReference type="ChEBI" id="CHEBI:62192"/>
    </reaction>
</comment>
<comment type="subunit">
    <text evidence="1">NDH-1 can be composed of about 15 different subunits; different subcomplexes with different compositions have been identified which probably have different functions.</text>
</comment>
<comment type="subcellular location">
    <subcellularLocation>
        <location evidence="1">Cellular thylakoid membrane</location>
        <topology evidence="1">Multi-pass membrane protein</topology>
    </subcellularLocation>
</comment>
<comment type="similarity">
    <text evidence="1">Belongs to the complex I subunit 4L family.</text>
</comment>
<keyword id="KW-0472">Membrane</keyword>
<keyword id="KW-0520">NAD</keyword>
<keyword id="KW-0521">NADP</keyword>
<keyword id="KW-0618">Plastoquinone</keyword>
<keyword id="KW-0874">Quinone</keyword>
<keyword id="KW-0793">Thylakoid</keyword>
<keyword id="KW-1278">Translocase</keyword>
<keyword id="KW-0812">Transmembrane</keyword>
<keyword id="KW-1133">Transmembrane helix</keyword>
<keyword id="KW-0813">Transport</keyword>
<reference key="1">
    <citation type="journal article" date="2007" name="ISME J.">
        <title>Population level functional diversity in a microbial community revealed by comparative genomic and metagenomic analyses.</title>
        <authorList>
            <person name="Bhaya D."/>
            <person name="Grossman A.R."/>
            <person name="Steunou A.-S."/>
            <person name="Khuri N."/>
            <person name="Cohan F.M."/>
            <person name="Hamamura N."/>
            <person name="Melendrez M.C."/>
            <person name="Bateson M.M."/>
            <person name="Ward D.M."/>
            <person name="Heidelberg J.F."/>
        </authorList>
    </citation>
    <scope>NUCLEOTIDE SEQUENCE [LARGE SCALE GENOMIC DNA]</scope>
    <source>
        <strain>JA-3-3Ab</strain>
    </source>
</reference>
<accession>Q2JU34</accession>
<gene>
    <name evidence="1" type="primary">ndhE</name>
    <name type="ordered locus">CYA_1630</name>
</gene>
<dbReference type="EC" id="7.1.1.-" evidence="1"/>
<dbReference type="EMBL" id="CP000239">
    <property type="protein sequence ID" value="ABC99790.1"/>
    <property type="molecule type" value="Genomic_DNA"/>
</dbReference>
<dbReference type="SMR" id="Q2JU34"/>
<dbReference type="STRING" id="321327.CYA_1630"/>
<dbReference type="KEGG" id="cya:CYA_1630"/>
<dbReference type="eggNOG" id="COG0713">
    <property type="taxonomic scope" value="Bacteria"/>
</dbReference>
<dbReference type="HOGENOM" id="CLU_144724_1_1_3"/>
<dbReference type="Proteomes" id="UP000008818">
    <property type="component" value="Chromosome"/>
</dbReference>
<dbReference type="GO" id="GO:0030964">
    <property type="term" value="C:NADH dehydrogenase complex"/>
    <property type="evidence" value="ECO:0007669"/>
    <property type="project" value="TreeGrafter"/>
</dbReference>
<dbReference type="GO" id="GO:0031676">
    <property type="term" value="C:plasma membrane-derived thylakoid membrane"/>
    <property type="evidence" value="ECO:0007669"/>
    <property type="project" value="UniProtKB-SubCell"/>
</dbReference>
<dbReference type="GO" id="GO:0016655">
    <property type="term" value="F:oxidoreductase activity, acting on NAD(P)H, quinone or similar compound as acceptor"/>
    <property type="evidence" value="ECO:0007669"/>
    <property type="project" value="UniProtKB-UniRule"/>
</dbReference>
<dbReference type="GO" id="GO:0048038">
    <property type="term" value="F:quinone binding"/>
    <property type="evidence" value="ECO:0007669"/>
    <property type="project" value="UniProtKB-KW"/>
</dbReference>
<dbReference type="GO" id="GO:0042773">
    <property type="term" value="P:ATP synthesis coupled electron transport"/>
    <property type="evidence" value="ECO:0007669"/>
    <property type="project" value="InterPro"/>
</dbReference>
<dbReference type="GO" id="GO:0019684">
    <property type="term" value="P:photosynthesis, light reaction"/>
    <property type="evidence" value="ECO:0007669"/>
    <property type="project" value="UniProtKB-UniRule"/>
</dbReference>
<dbReference type="FunFam" id="1.10.287.3510:FF:000001">
    <property type="entry name" value="NADH-quinone oxidoreductase subunit K"/>
    <property type="match status" value="1"/>
</dbReference>
<dbReference type="Gene3D" id="1.10.287.3510">
    <property type="match status" value="1"/>
</dbReference>
<dbReference type="HAMAP" id="MF_01456">
    <property type="entry name" value="NDH1_NuoK"/>
    <property type="match status" value="1"/>
</dbReference>
<dbReference type="InterPro" id="IPR001133">
    <property type="entry name" value="NADH_UbQ_OxRdtase_chain4L/K"/>
</dbReference>
<dbReference type="InterPro" id="IPR039428">
    <property type="entry name" value="NUOK/Mnh_C1-like"/>
</dbReference>
<dbReference type="NCBIfam" id="NF004320">
    <property type="entry name" value="PRK05715.1-2"/>
    <property type="match status" value="1"/>
</dbReference>
<dbReference type="NCBIfam" id="NF004321">
    <property type="entry name" value="PRK05715.1-3"/>
    <property type="match status" value="1"/>
</dbReference>
<dbReference type="NCBIfam" id="NF004322">
    <property type="entry name" value="PRK05715.1-4"/>
    <property type="match status" value="1"/>
</dbReference>
<dbReference type="NCBIfam" id="NF004323">
    <property type="entry name" value="PRK05715.1-5"/>
    <property type="match status" value="1"/>
</dbReference>
<dbReference type="PANTHER" id="PTHR11434:SF16">
    <property type="entry name" value="NADH-UBIQUINONE OXIDOREDUCTASE CHAIN 4L"/>
    <property type="match status" value="1"/>
</dbReference>
<dbReference type="PANTHER" id="PTHR11434">
    <property type="entry name" value="NADH-UBIQUINONE OXIDOREDUCTASE SUBUNIT ND4L"/>
    <property type="match status" value="1"/>
</dbReference>
<dbReference type="Pfam" id="PF00420">
    <property type="entry name" value="Oxidored_q2"/>
    <property type="match status" value="1"/>
</dbReference>
<name>NU4LC_SYNJA</name>
<sequence length="102" mass="11291">MLQLQFFLVVAAILFCIGIYGLIVSRNAIRVLMSIELMLNAVNLNFMAFSNFVDSGLIRGQVFSVFVITVAAAEAAVGLAIVLGIYRNRATIDMESFNLLRW</sequence>
<feature type="chain" id="PRO_0000390260" description="NAD(P)H-quinone oxidoreductase subunit 4L">
    <location>
        <begin position="1"/>
        <end position="102"/>
    </location>
</feature>
<feature type="transmembrane region" description="Helical" evidence="1">
    <location>
        <begin position="4"/>
        <end position="24"/>
    </location>
</feature>
<feature type="transmembrane region" description="Helical" evidence="1">
    <location>
        <begin position="33"/>
        <end position="53"/>
    </location>
</feature>
<feature type="transmembrane region" description="Helical" evidence="1">
    <location>
        <begin position="65"/>
        <end position="85"/>
    </location>
</feature>
<protein>
    <recommendedName>
        <fullName evidence="1">NAD(P)H-quinone oxidoreductase subunit 4L</fullName>
        <ecNumber evidence="1">7.1.1.-</ecNumber>
    </recommendedName>
    <alternativeName>
        <fullName evidence="1">NAD(P)H dehydrogenase subunit 4L</fullName>
    </alternativeName>
    <alternativeName>
        <fullName evidence="1">NADH-plastoquinone oxidoreductase subunit 4L</fullName>
    </alternativeName>
    <alternativeName>
        <fullName evidence="1">NDH-1, subunit 4L</fullName>
    </alternativeName>
    <alternativeName>
        <fullName evidence="1">NDH-E</fullName>
    </alternativeName>
</protein>
<evidence type="ECO:0000255" key="1">
    <source>
        <dbReference type="HAMAP-Rule" id="MF_01456"/>
    </source>
</evidence>
<organism>
    <name type="scientific">Synechococcus sp. (strain JA-3-3Ab)</name>
    <name type="common">Cyanobacteria bacterium Yellowstone A-Prime</name>
    <dbReference type="NCBI Taxonomy" id="321327"/>
    <lineage>
        <taxon>Bacteria</taxon>
        <taxon>Bacillati</taxon>
        <taxon>Cyanobacteriota</taxon>
        <taxon>Cyanophyceae</taxon>
        <taxon>Synechococcales</taxon>
        <taxon>Synechococcaceae</taxon>
        <taxon>Synechococcus</taxon>
    </lineage>
</organism>